<organism>
    <name type="scientific">Micrococcus luteus (strain ATCC 4698 / DSM 20030 / JCM 1464 / CCM 169 / CCUG 5858 / IAM 1056 / NBRC 3333 / NCIMB 9278 / NCTC 2665 / VKM Ac-2230)</name>
    <name type="common">Micrococcus lysodeikticus</name>
    <dbReference type="NCBI Taxonomy" id="465515"/>
    <lineage>
        <taxon>Bacteria</taxon>
        <taxon>Bacillati</taxon>
        <taxon>Actinomycetota</taxon>
        <taxon>Actinomycetes</taxon>
        <taxon>Micrococcales</taxon>
        <taxon>Micrococcaceae</taxon>
        <taxon>Micrococcus</taxon>
    </lineage>
</organism>
<keyword id="KW-1185">Reference proteome</keyword>
<keyword id="KW-0687">Ribonucleoprotein</keyword>
<keyword id="KW-0689">Ribosomal protein</keyword>
<accession>C5CC39</accession>
<comment type="similarity">
    <text evidence="1">Belongs to the bacterial ribosomal protein bL36 family.</text>
</comment>
<dbReference type="EMBL" id="CP001628">
    <property type="protein sequence ID" value="ACS31180.1"/>
    <property type="molecule type" value="Genomic_DNA"/>
</dbReference>
<dbReference type="RefSeq" id="WP_002857509.1">
    <property type="nucleotide sequence ID" value="NZ_WBMF01000001.1"/>
</dbReference>
<dbReference type="SMR" id="C5CC39"/>
<dbReference type="STRING" id="465515.Mlut_16930"/>
<dbReference type="EnsemblBacteria" id="ACS31180">
    <property type="protein sequence ID" value="ACS31180"/>
    <property type="gene ID" value="Mlut_16930"/>
</dbReference>
<dbReference type="GeneID" id="93364293"/>
<dbReference type="KEGG" id="mlu:Mlut_16930"/>
<dbReference type="eggNOG" id="COG0257">
    <property type="taxonomic scope" value="Bacteria"/>
</dbReference>
<dbReference type="HOGENOM" id="CLU_135723_6_2_11"/>
<dbReference type="Proteomes" id="UP000000738">
    <property type="component" value="Chromosome"/>
</dbReference>
<dbReference type="GO" id="GO:0005737">
    <property type="term" value="C:cytoplasm"/>
    <property type="evidence" value="ECO:0007669"/>
    <property type="project" value="UniProtKB-ARBA"/>
</dbReference>
<dbReference type="GO" id="GO:1990904">
    <property type="term" value="C:ribonucleoprotein complex"/>
    <property type="evidence" value="ECO:0007669"/>
    <property type="project" value="UniProtKB-KW"/>
</dbReference>
<dbReference type="GO" id="GO:0005840">
    <property type="term" value="C:ribosome"/>
    <property type="evidence" value="ECO:0007669"/>
    <property type="project" value="UniProtKB-KW"/>
</dbReference>
<dbReference type="GO" id="GO:0003735">
    <property type="term" value="F:structural constituent of ribosome"/>
    <property type="evidence" value="ECO:0007669"/>
    <property type="project" value="InterPro"/>
</dbReference>
<dbReference type="GO" id="GO:0006412">
    <property type="term" value="P:translation"/>
    <property type="evidence" value="ECO:0007669"/>
    <property type="project" value="UniProtKB-UniRule"/>
</dbReference>
<dbReference type="HAMAP" id="MF_00251">
    <property type="entry name" value="Ribosomal_bL36"/>
    <property type="match status" value="1"/>
</dbReference>
<dbReference type="InterPro" id="IPR000473">
    <property type="entry name" value="Ribosomal_bL36"/>
</dbReference>
<dbReference type="InterPro" id="IPR035977">
    <property type="entry name" value="Ribosomal_bL36_sp"/>
</dbReference>
<dbReference type="NCBIfam" id="TIGR01022">
    <property type="entry name" value="rpmJ_bact"/>
    <property type="match status" value="1"/>
</dbReference>
<dbReference type="PANTHER" id="PTHR42888">
    <property type="entry name" value="50S RIBOSOMAL PROTEIN L36, CHLOROPLASTIC"/>
    <property type="match status" value="1"/>
</dbReference>
<dbReference type="PANTHER" id="PTHR42888:SF1">
    <property type="entry name" value="LARGE RIBOSOMAL SUBUNIT PROTEIN BL36C"/>
    <property type="match status" value="1"/>
</dbReference>
<dbReference type="Pfam" id="PF00444">
    <property type="entry name" value="Ribosomal_L36"/>
    <property type="match status" value="1"/>
</dbReference>
<dbReference type="SUPFAM" id="SSF57840">
    <property type="entry name" value="Ribosomal protein L36"/>
    <property type="match status" value="1"/>
</dbReference>
<dbReference type="PROSITE" id="PS00828">
    <property type="entry name" value="RIBOSOMAL_L36"/>
    <property type="match status" value="1"/>
</dbReference>
<name>RL36_MICLC</name>
<reference key="1">
    <citation type="journal article" date="2010" name="J. Bacteriol.">
        <title>Genome sequence of the Fleming strain of Micrococcus luteus, a simple free-living actinobacterium.</title>
        <authorList>
            <person name="Young M."/>
            <person name="Artsatbanov V."/>
            <person name="Beller H.R."/>
            <person name="Chandra G."/>
            <person name="Chater K.F."/>
            <person name="Dover L.G."/>
            <person name="Goh E.B."/>
            <person name="Kahan T."/>
            <person name="Kaprelyants A.S."/>
            <person name="Kyrpides N."/>
            <person name="Lapidus A."/>
            <person name="Lowry S.R."/>
            <person name="Lykidis A."/>
            <person name="Mahillon J."/>
            <person name="Markowitz V."/>
            <person name="Mavromatis K."/>
            <person name="Mukamolova G.V."/>
            <person name="Oren A."/>
            <person name="Rokem J.S."/>
            <person name="Smith M.C."/>
            <person name="Young D.I."/>
            <person name="Greenblatt C.L."/>
        </authorList>
    </citation>
    <scope>NUCLEOTIDE SEQUENCE [LARGE SCALE GENOMIC DNA]</scope>
    <source>
        <strain>ATCC 4698 / DSM 20030 / JCM 1464 / CCM 169 / CCUG 5858 / IAM 1056 / NBRC 3333 / NCIMB 9278 / NCTC 2665 / VKM Ac-2230</strain>
    </source>
</reference>
<gene>
    <name evidence="1" type="primary">rpmJ</name>
    <name type="ordered locus">Mlut_16930</name>
</gene>
<sequence>MKVQPSVKRICDKCQVVRRKGRVLVICSNPRHKQRQG</sequence>
<evidence type="ECO:0000255" key="1">
    <source>
        <dbReference type="HAMAP-Rule" id="MF_00251"/>
    </source>
</evidence>
<evidence type="ECO:0000305" key="2"/>
<protein>
    <recommendedName>
        <fullName evidence="1">Large ribosomal subunit protein bL36</fullName>
    </recommendedName>
    <alternativeName>
        <fullName evidence="2">50S ribosomal protein L36</fullName>
    </alternativeName>
</protein>
<proteinExistence type="inferred from homology"/>
<feature type="chain" id="PRO_1000204556" description="Large ribosomal subunit protein bL36">
    <location>
        <begin position="1"/>
        <end position="37"/>
    </location>
</feature>